<accession>A8ZTF0</accession>
<reference key="1">
    <citation type="submission" date="2007-10" db="EMBL/GenBank/DDBJ databases">
        <title>Complete sequence of Desulfococcus oleovorans Hxd3.</title>
        <authorList>
            <consortium name="US DOE Joint Genome Institute"/>
            <person name="Copeland A."/>
            <person name="Lucas S."/>
            <person name="Lapidus A."/>
            <person name="Barry K."/>
            <person name="Glavina del Rio T."/>
            <person name="Dalin E."/>
            <person name="Tice H."/>
            <person name="Pitluck S."/>
            <person name="Kiss H."/>
            <person name="Brettin T."/>
            <person name="Bruce D."/>
            <person name="Detter J.C."/>
            <person name="Han C."/>
            <person name="Schmutz J."/>
            <person name="Larimer F."/>
            <person name="Land M."/>
            <person name="Hauser L."/>
            <person name="Kyrpides N."/>
            <person name="Kim E."/>
            <person name="Wawrik B."/>
            <person name="Richardson P."/>
        </authorList>
    </citation>
    <scope>NUCLEOTIDE SEQUENCE [LARGE SCALE GENOMIC DNA]</scope>
    <source>
        <strain>DSM 6200 / JCM 39069 / Hxd3</strain>
    </source>
</reference>
<protein>
    <recommendedName>
        <fullName evidence="1">Adenylosuccinate synthetase</fullName>
        <shortName evidence="1">AMPSase</shortName>
        <shortName evidence="1">AdSS</shortName>
        <ecNumber evidence="1">6.3.4.4</ecNumber>
    </recommendedName>
    <alternativeName>
        <fullName evidence="1">IMP--aspartate ligase</fullName>
    </alternativeName>
</protein>
<name>PURA_DESOH</name>
<keyword id="KW-0963">Cytoplasm</keyword>
<keyword id="KW-0342">GTP-binding</keyword>
<keyword id="KW-0436">Ligase</keyword>
<keyword id="KW-0460">Magnesium</keyword>
<keyword id="KW-0479">Metal-binding</keyword>
<keyword id="KW-0547">Nucleotide-binding</keyword>
<keyword id="KW-0658">Purine biosynthesis</keyword>
<keyword id="KW-1185">Reference proteome</keyword>
<organism>
    <name type="scientific">Desulfosudis oleivorans (strain DSM 6200 / JCM 39069 / Hxd3)</name>
    <name type="common">Desulfococcus oleovorans</name>
    <dbReference type="NCBI Taxonomy" id="96561"/>
    <lineage>
        <taxon>Bacteria</taxon>
        <taxon>Pseudomonadati</taxon>
        <taxon>Thermodesulfobacteriota</taxon>
        <taxon>Desulfobacteria</taxon>
        <taxon>Desulfobacterales</taxon>
        <taxon>Desulfosudaceae</taxon>
        <taxon>Desulfosudis</taxon>
    </lineage>
</organism>
<feature type="chain" id="PRO_1000089288" description="Adenylosuccinate synthetase">
    <location>
        <begin position="1"/>
        <end position="429"/>
    </location>
</feature>
<feature type="active site" description="Proton acceptor" evidence="1">
    <location>
        <position position="13"/>
    </location>
</feature>
<feature type="active site" description="Proton donor" evidence="1">
    <location>
        <position position="41"/>
    </location>
</feature>
<feature type="binding site" evidence="1">
    <location>
        <begin position="12"/>
        <end position="18"/>
    </location>
    <ligand>
        <name>GTP</name>
        <dbReference type="ChEBI" id="CHEBI:37565"/>
    </ligand>
</feature>
<feature type="binding site" description="in other chain" evidence="1">
    <location>
        <begin position="13"/>
        <end position="16"/>
    </location>
    <ligand>
        <name>IMP</name>
        <dbReference type="ChEBI" id="CHEBI:58053"/>
        <note>ligand shared between dimeric partners</note>
    </ligand>
</feature>
<feature type="binding site" evidence="1">
    <location>
        <position position="13"/>
    </location>
    <ligand>
        <name>Mg(2+)</name>
        <dbReference type="ChEBI" id="CHEBI:18420"/>
    </ligand>
</feature>
<feature type="binding site" description="in other chain" evidence="1">
    <location>
        <begin position="38"/>
        <end position="41"/>
    </location>
    <ligand>
        <name>IMP</name>
        <dbReference type="ChEBI" id="CHEBI:58053"/>
        <note>ligand shared between dimeric partners</note>
    </ligand>
</feature>
<feature type="binding site" evidence="1">
    <location>
        <begin position="40"/>
        <end position="42"/>
    </location>
    <ligand>
        <name>GTP</name>
        <dbReference type="ChEBI" id="CHEBI:37565"/>
    </ligand>
</feature>
<feature type="binding site" evidence="1">
    <location>
        <position position="40"/>
    </location>
    <ligand>
        <name>Mg(2+)</name>
        <dbReference type="ChEBI" id="CHEBI:18420"/>
    </ligand>
</feature>
<feature type="binding site" description="in other chain" evidence="1">
    <location>
        <position position="129"/>
    </location>
    <ligand>
        <name>IMP</name>
        <dbReference type="ChEBI" id="CHEBI:58053"/>
        <note>ligand shared between dimeric partners</note>
    </ligand>
</feature>
<feature type="binding site" evidence="1">
    <location>
        <position position="143"/>
    </location>
    <ligand>
        <name>IMP</name>
        <dbReference type="ChEBI" id="CHEBI:58053"/>
        <note>ligand shared between dimeric partners</note>
    </ligand>
</feature>
<feature type="binding site" description="in other chain" evidence="1">
    <location>
        <position position="224"/>
    </location>
    <ligand>
        <name>IMP</name>
        <dbReference type="ChEBI" id="CHEBI:58053"/>
        <note>ligand shared between dimeric partners</note>
    </ligand>
</feature>
<feature type="binding site" description="in other chain" evidence="1">
    <location>
        <position position="239"/>
    </location>
    <ligand>
        <name>IMP</name>
        <dbReference type="ChEBI" id="CHEBI:58053"/>
        <note>ligand shared between dimeric partners</note>
    </ligand>
</feature>
<feature type="binding site" evidence="1">
    <location>
        <begin position="299"/>
        <end position="305"/>
    </location>
    <ligand>
        <name>substrate</name>
    </ligand>
</feature>
<feature type="binding site" description="in other chain" evidence="1">
    <location>
        <position position="303"/>
    </location>
    <ligand>
        <name>IMP</name>
        <dbReference type="ChEBI" id="CHEBI:58053"/>
        <note>ligand shared between dimeric partners</note>
    </ligand>
</feature>
<feature type="binding site" evidence="1">
    <location>
        <position position="305"/>
    </location>
    <ligand>
        <name>GTP</name>
        <dbReference type="ChEBI" id="CHEBI:37565"/>
    </ligand>
</feature>
<feature type="binding site" evidence="1">
    <location>
        <begin position="331"/>
        <end position="333"/>
    </location>
    <ligand>
        <name>GTP</name>
        <dbReference type="ChEBI" id="CHEBI:37565"/>
    </ligand>
</feature>
<feature type="binding site" evidence="1">
    <location>
        <begin position="413"/>
        <end position="415"/>
    </location>
    <ligand>
        <name>GTP</name>
        <dbReference type="ChEBI" id="CHEBI:37565"/>
    </ligand>
</feature>
<dbReference type="EC" id="6.3.4.4" evidence="1"/>
<dbReference type="EMBL" id="CP000859">
    <property type="protein sequence ID" value="ABW67833.1"/>
    <property type="molecule type" value="Genomic_DNA"/>
</dbReference>
<dbReference type="RefSeq" id="WP_012175445.1">
    <property type="nucleotide sequence ID" value="NC_009943.1"/>
</dbReference>
<dbReference type="SMR" id="A8ZTF0"/>
<dbReference type="STRING" id="96561.Dole_2029"/>
<dbReference type="KEGG" id="dol:Dole_2029"/>
<dbReference type="eggNOG" id="COG0104">
    <property type="taxonomic scope" value="Bacteria"/>
</dbReference>
<dbReference type="HOGENOM" id="CLU_029848_0_0_7"/>
<dbReference type="OrthoDB" id="9807553at2"/>
<dbReference type="UniPathway" id="UPA00075">
    <property type="reaction ID" value="UER00335"/>
</dbReference>
<dbReference type="Proteomes" id="UP000008561">
    <property type="component" value="Chromosome"/>
</dbReference>
<dbReference type="GO" id="GO:0005737">
    <property type="term" value="C:cytoplasm"/>
    <property type="evidence" value="ECO:0007669"/>
    <property type="project" value="UniProtKB-SubCell"/>
</dbReference>
<dbReference type="GO" id="GO:0004019">
    <property type="term" value="F:adenylosuccinate synthase activity"/>
    <property type="evidence" value="ECO:0007669"/>
    <property type="project" value="UniProtKB-UniRule"/>
</dbReference>
<dbReference type="GO" id="GO:0005525">
    <property type="term" value="F:GTP binding"/>
    <property type="evidence" value="ECO:0007669"/>
    <property type="project" value="UniProtKB-UniRule"/>
</dbReference>
<dbReference type="GO" id="GO:0000287">
    <property type="term" value="F:magnesium ion binding"/>
    <property type="evidence" value="ECO:0007669"/>
    <property type="project" value="UniProtKB-UniRule"/>
</dbReference>
<dbReference type="GO" id="GO:0044208">
    <property type="term" value="P:'de novo' AMP biosynthetic process"/>
    <property type="evidence" value="ECO:0007669"/>
    <property type="project" value="UniProtKB-UniRule"/>
</dbReference>
<dbReference type="GO" id="GO:0046040">
    <property type="term" value="P:IMP metabolic process"/>
    <property type="evidence" value="ECO:0007669"/>
    <property type="project" value="TreeGrafter"/>
</dbReference>
<dbReference type="CDD" id="cd03108">
    <property type="entry name" value="AdSS"/>
    <property type="match status" value="1"/>
</dbReference>
<dbReference type="FunFam" id="1.10.300.10:FF:000001">
    <property type="entry name" value="Adenylosuccinate synthetase"/>
    <property type="match status" value="1"/>
</dbReference>
<dbReference type="FunFam" id="3.90.170.10:FF:000001">
    <property type="entry name" value="Adenylosuccinate synthetase"/>
    <property type="match status" value="1"/>
</dbReference>
<dbReference type="Gene3D" id="3.40.440.10">
    <property type="entry name" value="Adenylosuccinate Synthetase, subunit A, domain 1"/>
    <property type="match status" value="1"/>
</dbReference>
<dbReference type="Gene3D" id="1.10.300.10">
    <property type="entry name" value="Adenylosuccinate Synthetase, subunit A, domain 2"/>
    <property type="match status" value="1"/>
</dbReference>
<dbReference type="Gene3D" id="3.90.170.10">
    <property type="entry name" value="Adenylosuccinate Synthetase, subunit A, domain 3"/>
    <property type="match status" value="1"/>
</dbReference>
<dbReference type="HAMAP" id="MF_00011">
    <property type="entry name" value="Adenylosucc_synth"/>
    <property type="match status" value="1"/>
</dbReference>
<dbReference type="InterPro" id="IPR018220">
    <property type="entry name" value="Adenylosuccin_syn_GTP-bd"/>
</dbReference>
<dbReference type="InterPro" id="IPR033128">
    <property type="entry name" value="Adenylosuccin_syn_Lys_AS"/>
</dbReference>
<dbReference type="InterPro" id="IPR042109">
    <property type="entry name" value="Adenylosuccinate_synth_dom1"/>
</dbReference>
<dbReference type="InterPro" id="IPR042110">
    <property type="entry name" value="Adenylosuccinate_synth_dom2"/>
</dbReference>
<dbReference type="InterPro" id="IPR042111">
    <property type="entry name" value="Adenylosuccinate_synth_dom3"/>
</dbReference>
<dbReference type="InterPro" id="IPR001114">
    <property type="entry name" value="Adenylosuccinate_synthetase"/>
</dbReference>
<dbReference type="InterPro" id="IPR027417">
    <property type="entry name" value="P-loop_NTPase"/>
</dbReference>
<dbReference type="NCBIfam" id="NF002223">
    <property type="entry name" value="PRK01117.1"/>
    <property type="match status" value="1"/>
</dbReference>
<dbReference type="NCBIfam" id="TIGR00184">
    <property type="entry name" value="purA"/>
    <property type="match status" value="1"/>
</dbReference>
<dbReference type="PANTHER" id="PTHR11846">
    <property type="entry name" value="ADENYLOSUCCINATE SYNTHETASE"/>
    <property type="match status" value="1"/>
</dbReference>
<dbReference type="PANTHER" id="PTHR11846:SF0">
    <property type="entry name" value="ADENYLOSUCCINATE SYNTHETASE"/>
    <property type="match status" value="1"/>
</dbReference>
<dbReference type="Pfam" id="PF00709">
    <property type="entry name" value="Adenylsucc_synt"/>
    <property type="match status" value="1"/>
</dbReference>
<dbReference type="SMART" id="SM00788">
    <property type="entry name" value="Adenylsucc_synt"/>
    <property type="match status" value="1"/>
</dbReference>
<dbReference type="SUPFAM" id="SSF52540">
    <property type="entry name" value="P-loop containing nucleoside triphosphate hydrolases"/>
    <property type="match status" value="1"/>
</dbReference>
<dbReference type="PROSITE" id="PS01266">
    <property type="entry name" value="ADENYLOSUCCIN_SYN_1"/>
    <property type="match status" value="1"/>
</dbReference>
<dbReference type="PROSITE" id="PS00513">
    <property type="entry name" value="ADENYLOSUCCIN_SYN_2"/>
    <property type="match status" value="1"/>
</dbReference>
<sequence length="429" mass="46058">MANIVVVGTQWGDEGKGKIVDLLAAFADLVVRFQGGNNAGHTLVVNGESFISHLVPSGILQGKMCLIGNGVVVDPAVLTEEMAALRSRGVAVIPEKFKVSASAHIIMPYHKTIDLVREEAKGHEKIGTTGRGIGPCYEDKVGRNGLRFVDMLDLPAFREKMARQVKEKNLYLERMFGAAPLDVDGAVAEYVGYAETLAPYIADVSRILADASDEGRQVLFEGAQGTYLDIDHGTYPYVTSSNTVAGNACCGSGIGPRDLSGVLGIVKAYTTRVGEGPFPTELFDDVGDFMQRTGSEFGATTGRKRRCGWLDAVMLKSAARLNGLTGLAITKLDVLTGLDTLEICTAYRYQGKTLSDFPADVKTLSQCEPVYEAVQGWQEDISGVRSAADLPDAARRYLDRITELVGVRVDIVSVGAGRDQTVVINNPFA</sequence>
<comment type="function">
    <text evidence="1">Plays an important role in the de novo pathway of purine nucleotide biosynthesis. Catalyzes the first committed step in the biosynthesis of AMP from IMP.</text>
</comment>
<comment type="catalytic activity">
    <reaction evidence="1">
        <text>IMP + L-aspartate + GTP = N(6)-(1,2-dicarboxyethyl)-AMP + GDP + phosphate + 2 H(+)</text>
        <dbReference type="Rhea" id="RHEA:15753"/>
        <dbReference type="ChEBI" id="CHEBI:15378"/>
        <dbReference type="ChEBI" id="CHEBI:29991"/>
        <dbReference type="ChEBI" id="CHEBI:37565"/>
        <dbReference type="ChEBI" id="CHEBI:43474"/>
        <dbReference type="ChEBI" id="CHEBI:57567"/>
        <dbReference type="ChEBI" id="CHEBI:58053"/>
        <dbReference type="ChEBI" id="CHEBI:58189"/>
        <dbReference type="EC" id="6.3.4.4"/>
    </reaction>
</comment>
<comment type="cofactor">
    <cofactor evidence="1">
        <name>Mg(2+)</name>
        <dbReference type="ChEBI" id="CHEBI:18420"/>
    </cofactor>
    <text evidence="1">Binds 1 Mg(2+) ion per subunit.</text>
</comment>
<comment type="pathway">
    <text evidence="1">Purine metabolism; AMP biosynthesis via de novo pathway; AMP from IMP: step 1/2.</text>
</comment>
<comment type="subunit">
    <text evidence="1">Homodimer.</text>
</comment>
<comment type="subcellular location">
    <subcellularLocation>
        <location evidence="1">Cytoplasm</location>
    </subcellularLocation>
</comment>
<comment type="similarity">
    <text evidence="1">Belongs to the adenylosuccinate synthetase family.</text>
</comment>
<evidence type="ECO:0000255" key="1">
    <source>
        <dbReference type="HAMAP-Rule" id="MF_00011"/>
    </source>
</evidence>
<gene>
    <name evidence="1" type="primary">purA</name>
    <name type="ordered locus">Dole_2029</name>
</gene>
<proteinExistence type="inferred from homology"/>